<sequence>MKATTIIGIAGGSGSGKTTVTNEIMKNLEGHSVALLAQDYYYKDQKHLTFDERLETNYDHPFAFDNDLLIENLKDLKNGKAVEVPTYDYASHTRSDITIDFKPKDVIIVEGIFALENKVLRDMMDVKIYVDTDADLRILRRLTRDTKERGRSMDSVINQYLSVVRPMHDQFIEPTKKYADIIIPEGGSNKVAIDIMTTKIQSLVSKQ</sequence>
<gene>
    <name evidence="1" type="primary">udk</name>
    <name type="ordered locus">SaurJH1_1702</name>
</gene>
<protein>
    <recommendedName>
        <fullName evidence="1">Uridine kinase</fullName>
        <ecNumber evidence="1">2.7.1.48</ecNumber>
    </recommendedName>
    <alternativeName>
        <fullName evidence="1">Cytidine monophosphokinase</fullName>
    </alternativeName>
    <alternativeName>
        <fullName evidence="1">Uridine monophosphokinase</fullName>
    </alternativeName>
</protein>
<proteinExistence type="inferred from homology"/>
<organism>
    <name type="scientific">Staphylococcus aureus (strain JH1)</name>
    <dbReference type="NCBI Taxonomy" id="359787"/>
    <lineage>
        <taxon>Bacteria</taxon>
        <taxon>Bacillati</taxon>
        <taxon>Bacillota</taxon>
        <taxon>Bacilli</taxon>
        <taxon>Bacillales</taxon>
        <taxon>Staphylococcaceae</taxon>
        <taxon>Staphylococcus</taxon>
    </lineage>
</organism>
<keyword id="KW-0067">ATP-binding</keyword>
<keyword id="KW-0963">Cytoplasm</keyword>
<keyword id="KW-0418">Kinase</keyword>
<keyword id="KW-0547">Nucleotide-binding</keyword>
<keyword id="KW-0808">Transferase</keyword>
<name>URK_STAA2</name>
<feature type="chain" id="PRO_1000081973" description="Uridine kinase">
    <location>
        <begin position="1"/>
        <end position="207"/>
    </location>
</feature>
<feature type="binding site" evidence="1">
    <location>
        <begin position="11"/>
        <end position="18"/>
    </location>
    <ligand>
        <name>ATP</name>
        <dbReference type="ChEBI" id="CHEBI:30616"/>
    </ligand>
</feature>
<accession>A6U280</accession>
<evidence type="ECO:0000255" key="1">
    <source>
        <dbReference type="HAMAP-Rule" id="MF_00551"/>
    </source>
</evidence>
<reference key="1">
    <citation type="submission" date="2007-06" db="EMBL/GenBank/DDBJ databases">
        <title>Complete sequence of chromosome of Staphylococcus aureus subsp. aureus JH1.</title>
        <authorList>
            <consortium name="US DOE Joint Genome Institute"/>
            <person name="Copeland A."/>
            <person name="Lucas S."/>
            <person name="Lapidus A."/>
            <person name="Barry K."/>
            <person name="Detter J.C."/>
            <person name="Glavina del Rio T."/>
            <person name="Hammon N."/>
            <person name="Israni S."/>
            <person name="Dalin E."/>
            <person name="Tice H."/>
            <person name="Pitluck S."/>
            <person name="Chain P."/>
            <person name="Malfatti S."/>
            <person name="Shin M."/>
            <person name="Vergez L."/>
            <person name="Schmutz J."/>
            <person name="Larimer F."/>
            <person name="Land M."/>
            <person name="Hauser L."/>
            <person name="Kyrpides N."/>
            <person name="Ivanova N."/>
            <person name="Tomasz A."/>
            <person name="Richardson P."/>
        </authorList>
    </citation>
    <scope>NUCLEOTIDE SEQUENCE [LARGE SCALE GENOMIC DNA]</scope>
    <source>
        <strain>JH1</strain>
    </source>
</reference>
<dbReference type="EC" id="2.7.1.48" evidence="1"/>
<dbReference type="EMBL" id="CP000736">
    <property type="protein sequence ID" value="ABR52548.1"/>
    <property type="molecule type" value="Genomic_DNA"/>
</dbReference>
<dbReference type="SMR" id="A6U280"/>
<dbReference type="KEGG" id="sah:SaurJH1_1702"/>
<dbReference type="HOGENOM" id="CLU_021278_1_2_9"/>
<dbReference type="UniPathway" id="UPA00574">
    <property type="reaction ID" value="UER00637"/>
</dbReference>
<dbReference type="UniPathway" id="UPA00579">
    <property type="reaction ID" value="UER00640"/>
</dbReference>
<dbReference type="GO" id="GO:0005737">
    <property type="term" value="C:cytoplasm"/>
    <property type="evidence" value="ECO:0007669"/>
    <property type="project" value="UniProtKB-SubCell"/>
</dbReference>
<dbReference type="GO" id="GO:0005524">
    <property type="term" value="F:ATP binding"/>
    <property type="evidence" value="ECO:0007669"/>
    <property type="project" value="UniProtKB-UniRule"/>
</dbReference>
<dbReference type="GO" id="GO:0043771">
    <property type="term" value="F:cytidine kinase activity"/>
    <property type="evidence" value="ECO:0007669"/>
    <property type="project" value="RHEA"/>
</dbReference>
<dbReference type="GO" id="GO:0004849">
    <property type="term" value="F:uridine kinase activity"/>
    <property type="evidence" value="ECO:0007669"/>
    <property type="project" value="UniProtKB-UniRule"/>
</dbReference>
<dbReference type="GO" id="GO:0044211">
    <property type="term" value="P:CTP salvage"/>
    <property type="evidence" value="ECO:0007669"/>
    <property type="project" value="UniProtKB-UniRule"/>
</dbReference>
<dbReference type="GO" id="GO:0044206">
    <property type="term" value="P:UMP salvage"/>
    <property type="evidence" value="ECO:0007669"/>
    <property type="project" value="UniProtKB-UniRule"/>
</dbReference>
<dbReference type="CDD" id="cd02023">
    <property type="entry name" value="UMPK"/>
    <property type="match status" value="1"/>
</dbReference>
<dbReference type="Gene3D" id="3.40.50.300">
    <property type="entry name" value="P-loop containing nucleotide triphosphate hydrolases"/>
    <property type="match status" value="1"/>
</dbReference>
<dbReference type="HAMAP" id="MF_00551">
    <property type="entry name" value="Uridine_kinase"/>
    <property type="match status" value="1"/>
</dbReference>
<dbReference type="InterPro" id="IPR027417">
    <property type="entry name" value="P-loop_NTPase"/>
</dbReference>
<dbReference type="InterPro" id="IPR006083">
    <property type="entry name" value="PRK/URK"/>
</dbReference>
<dbReference type="InterPro" id="IPR026008">
    <property type="entry name" value="Uridine_kinase"/>
</dbReference>
<dbReference type="InterPro" id="IPR000764">
    <property type="entry name" value="Uridine_kinase-like"/>
</dbReference>
<dbReference type="NCBIfam" id="NF004018">
    <property type="entry name" value="PRK05480.1"/>
    <property type="match status" value="1"/>
</dbReference>
<dbReference type="NCBIfam" id="TIGR00235">
    <property type="entry name" value="udk"/>
    <property type="match status" value="1"/>
</dbReference>
<dbReference type="PANTHER" id="PTHR10285">
    <property type="entry name" value="URIDINE KINASE"/>
    <property type="match status" value="1"/>
</dbReference>
<dbReference type="Pfam" id="PF00485">
    <property type="entry name" value="PRK"/>
    <property type="match status" value="1"/>
</dbReference>
<dbReference type="PRINTS" id="PR00988">
    <property type="entry name" value="URIDINKINASE"/>
</dbReference>
<dbReference type="SUPFAM" id="SSF52540">
    <property type="entry name" value="P-loop containing nucleoside triphosphate hydrolases"/>
    <property type="match status" value="1"/>
</dbReference>
<comment type="catalytic activity">
    <reaction evidence="1">
        <text>uridine + ATP = UMP + ADP + H(+)</text>
        <dbReference type="Rhea" id="RHEA:16825"/>
        <dbReference type="ChEBI" id="CHEBI:15378"/>
        <dbReference type="ChEBI" id="CHEBI:16704"/>
        <dbReference type="ChEBI" id="CHEBI:30616"/>
        <dbReference type="ChEBI" id="CHEBI:57865"/>
        <dbReference type="ChEBI" id="CHEBI:456216"/>
        <dbReference type="EC" id="2.7.1.48"/>
    </reaction>
</comment>
<comment type="catalytic activity">
    <reaction evidence="1">
        <text>cytidine + ATP = CMP + ADP + H(+)</text>
        <dbReference type="Rhea" id="RHEA:24674"/>
        <dbReference type="ChEBI" id="CHEBI:15378"/>
        <dbReference type="ChEBI" id="CHEBI:17562"/>
        <dbReference type="ChEBI" id="CHEBI:30616"/>
        <dbReference type="ChEBI" id="CHEBI:60377"/>
        <dbReference type="ChEBI" id="CHEBI:456216"/>
        <dbReference type="EC" id="2.7.1.48"/>
    </reaction>
</comment>
<comment type="pathway">
    <text evidence="1">Pyrimidine metabolism; CTP biosynthesis via salvage pathway; CTP from cytidine: step 1/3.</text>
</comment>
<comment type="pathway">
    <text evidence="1">Pyrimidine metabolism; UMP biosynthesis via salvage pathway; UMP from uridine: step 1/1.</text>
</comment>
<comment type="subcellular location">
    <subcellularLocation>
        <location evidence="1">Cytoplasm</location>
    </subcellularLocation>
</comment>
<comment type="similarity">
    <text evidence="1">Belongs to the uridine kinase family.</text>
</comment>